<feature type="chain" id="PRO_1000100897" description="ATP-dependent protease subunit HslV">
    <location>
        <begin position="1"/>
        <end position="176"/>
    </location>
</feature>
<feature type="active site" evidence="1">
    <location>
        <position position="2"/>
    </location>
</feature>
<feature type="binding site" evidence="1">
    <location>
        <position position="157"/>
    </location>
    <ligand>
        <name>Na(+)</name>
        <dbReference type="ChEBI" id="CHEBI:29101"/>
    </ligand>
</feature>
<feature type="binding site" evidence="1">
    <location>
        <position position="160"/>
    </location>
    <ligand>
        <name>Na(+)</name>
        <dbReference type="ChEBI" id="CHEBI:29101"/>
    </ligand>
</feature>
<feature type="binding site" evidence="1">
    <location>
        <position position="163"/>
    </location>
    <ligand>
        <name>Na(+)</name>
        <dbReference type="ChEBI" id="CHEBI:29101"/>
    </ligand>
</feature>
<sequence>MTTIVSVRRNGHVVIAGDGQATLGNTVMKGNVKKVRRLYNDKVIAGFAGGTADAFTLFELFERKLEMHQGHLVKAAVELAKDWRTDRMLRKLEALLAVADENASLIITGNGDVVQPENDLIAIGSGGPYAQAAARALLENTDMGARDIAEKALDIAGDICIYTNHFHTIEELPSKA</sequence>
<gene>
    <name evidence="1" type="primary">hslV</name>
    <name type="ordered locus">KPK_5452</name>
</gene>
<organism>
    <name type="scientific">Klebsiella pneumoniae (strain 342)</name>
    <dbReference type="NCBI Taxonomy" id="507522"/>
    <lineage>
        <taxon>Bacteria</taxon>
        <taxon>Pseudomonadati</taxon>
        <taxon>Pseudomonadota</taxon>
        <taxon>Gammaproteobacteria</taxon>
        <taxon>Enterobacterales</taxon>
        <taxon>Enterobacteriaceae</taxon>
        <taxon>Klebsiella/Raoultella group</taxon>
        <taxon>Klebsiella</taxon>
        <taxon>Klebsiella pneumoniae complex</taxon>
    </lineage>
</organism>
<accession>B5XZ36</accession>
<comment type="function">
    <text evidence="1">Protease subunit of a proteasome-like degradation complex believed to be a general protein degrading machinery.</text>
</comment>
<comment type="catalytic activity">
    <reaction evidence="1">
        <text>ATP-dependent cleavage of peptide bonds with broad specificity.</text>
        <dbReference type="EC" id="3.4.25.2"/>
    </reaction>
</comment>
<comment type="activity regulation">
    <text evidence="1">Allosterically activated by HslU binding.</text>
</comment>
<comment type="subunit">
    <text evidence="1">A double ring-shaped homohexamer of HslV is capped on each side by a ring-shaped HslU homohexamer. The assembly of the HslU/HslV complex is dependent on binding of ATP.</text>
</comment>
<comment type="subcellular location">
    <subcellularLocation>
        <location evidence="1">Cytoplasm</location>
    </subcellularLocation>
</comment>
<comment type="similarity">
    <text evidence="1">Belongs to the peptidase T1B family. HslV subfamily.</text>
</comment>
<protein>
    <recommendedName>
        <fullName evidence="1">ATP-dependent protease subunit HslV</fullName>
        <ecNumber evidence="1">3.4.25.2</ecNumber>
    </recommendedName>
</protein>
<name>HSLV_KLEP3</name>
<dbReference type="EC" id="3.4.25.2" evidence="1"/>
<dbReference type="EMBL" id="CP000964">
    <property type="protein sequence ID" value="ACI10454.1"/>
    <property type="molecule type" value="Genomic_DNA"/>
</dbReference>
<dbReference type="SMR" id="B5XZ36"/>
<dbReference type="MEROPS" id="T01.006"/>
<dbReference type="KEGG" id="kpe:KPK_5452"/>
<dbReference type="HOGENOM" id="CLU_093872_1_0_6"/>
<dbReference type="Proteomes" id="UP000001734">
    <property type="component" value="Chromosome"/>
</dbReference>
<dbReference type="GO" id="GO:0009376">
    <property type="term" value="C:HslUV protease complex"/>
    <property type="evidence" value="ECO:0007669"/>
    <property type="project" value="UniProtKB-UniRule"/>
</dbReference>
<dbReference type="GO" id="GO:0005839">
    <property type="term" value="C:proteasome core complex"/>
    <property type="evidence" value="ECO:0007669"/>
    <property type="project" value="InterPro"/>
</dbReference>
<dbReference type="GO" id="GO:0046872">
    <property type="term" value="F:metal ion binding"/>
    <property type="evidence" value="ECO:0007669"/>
    <property type="project" value="UniProtKB-KW"/>
</dbReference>
<dbReference type="GO" id="GO:0004298">
    <property type="term" value="F:threonine-type endopeptidase activity"/>
    <property type="evidence" value="ECO:0007669"/>
    <property type="project" value="UniProtKB-KW"/>
</dbReference>
<dbReference type="GO" id="GO:0051603">
    <property type="term" value="P:proteolysis involved in protein catabolic process"/>
    <property type="evidence" value="ECO:0007669"/>
    <property type="project" value="InterPro"/>
</dbReference>
<dbReference type="CDD" id="cd01913">
    <property type="entry name" value="protease_HslV"/>
    <property type="match status" value="1"/>
</dbReference>
<dbReference type="FunFam" id="3.60.20.10:FF:000002">
    <property type="entry name" value="ATP-dependent protease subunit HslV"/>
    <property type="match status" value="1"/>
</dbReference>
<dbReference type="Gene3D" id="3.60.20.10">
    <property type="entry name" value="Glutamine Phosphoribosylpyrophosphate, subunit 1, domain 1"/>
    <property type="match status" value="1"/>
</dbReference>
<dbReference type="HAMAP" id="MF_00248">
    <property type="entry name" value="HslV"/>
    <property type="match status" value="1"/>
</dbReference>
<dbReference type="InterPro" id="IPR022281">
    <property type="entry name" value="ATP-dep_Prtase_HsIV_su"/>
</dbReference>
<dbReference type="InterPro" id="IPR029055">
    <property type="entry name" value="Ntn_hydrolases_N"/>
</dbReference>
<dbReference type="InterPro" id="IPR001353">
    <property type="entry name" value="Proteasome_sua/b"/>
</dbReference>
<dbReference type="InterPro" id="IPR023333">
    <property type="entry name" value="Proteasome_suB-type"/>
</dbReference>
<dbReference type="NCBIfam" id="TIGR03692">
    <property type="entry name" value="ATP_dep_HslV"/>
    <property type="match status" value="1"/>
</dbReference>
<dbReference type="NCBIfam" id="NF003964">
    <property type="entry name" value="PRK05456.1"/>
    <property type="match status" value="1"/>
</dbReference>
<dbReference type="PANTHER" id="PTHR32194:SF0">
    <property type="entry name" value="ATP-DEPENDENT PROTEASE SUBUNIT HSLV"/>
    <property type="match status" value="1"/>
</dbReference>
<dbReference type="PANTHER" id="PTHR32194">
    <property type="entry name" value="METALLOPROTEASE TLDD"/>
    <property type="match status" value="1"/>
</dbReference>
<dbReference type="Pfam" id="PF00227">
    <property type="entry name" value="Proteasome"/>
    <property type="match status" value="1"/>
</dbReference>
<dbReference type="PIRSF" id="PIRSF039093">
    <property type="entry name" value="HslV"/>
    <property type="match status" value="1"/>
</dbReference>
<dbReference type="SUPFAM" id="SSF56235">
    <property type="entry name" value="N-terminal nucleophile aminohydrolases (Ntn hydrolases)"/>
    <property type="match status" value="1"/>
</dbReference>
<dbReference type="PROSITE" id="PS51476">
    <property type="entry name" value="PROTEASOME_BETA_2"/>
    <property type="match status" value="1"/>
</dbReference>
<reference key="1">
    <citation type="journal article" date="2008" name="PLoS Genet.">
        <title>Complete genome sequence of the N2-fixing broad host range endophyte Klebsiella pneumoniae 342 and virulence predictions verified in mice.</title>
        <authorList>
            <person name="Fouts D.E."/>
            <person name="Tyler H.L."/>
            <person name="DeBoy R.T."/>
            <person name="Daugherty S."/>
            <person name="Ren Q."/>
            <person name="Badger J.H."/>
            <person name="Durkin A.S."/>
            <person name="Huot H."/>
            <person name="Shrivastava S."/>
            <person name="Kothari S."/>
            <person name="Dodson R.J."/>
            <person name="Mohamoud Y."/>
            <person name="Khouri H."/>
            <person name="Roesch L.F.W."/>
            <person name="Krogfelt K.A."/>
            <person name="Struve C."/>
            <person name="Triplett E.W."/>
            <person name="Methe B.A."/>
        </authorList>
    </citation>
    <scope>NUCLEOTIDE SEQUENCE [LARGE SCALE GENOMIC DNA]</scope>
    <source>
        <strain>342</strain>
    </source>
</reference>
<keyword id="KW-0021">Allosteric enzyme</keyword>
<keyword id="KW-0963">Cytoplasm</keyword>
<keyword id="KW-0378">Hydrolase</keyword>
<keyword id="KW-0479">Metal-binding</keyword>
<keyword id="KW-0645">Protease</keyword>
<keyword id="KW-0915">Sodium</keyword>
<keyword id="KW-0888">Threonine protease</keyword>
<evidence type="ECO:0000255" key="1">
    <source>
        <dbReference type="HAMAP-Rule" id="MF_00248"/>
    </source>
</evidence>
<proteinExistence type="inferred from homology"/>